<sequence>MIRLVTLAALPVLVLCQFDPSKWFMGSNLGGLQGFGALPARCLKYLEPGLSRGNRPPSHRFFFNSTSGNCEQFVYYGRGGNRNNFRDVFKCMKSCGCKQQRNGGVPCNPPSQPVIRYYYDTFTKLCNTFQHTGCGGNSNHFKEWNDCFFTCGSGFEW</sequence>
<keyword id="KW-0903">Direct protein sequencing</keyword>
<keyword id="KW-1015">Disulfide bond</keyword>
<keyword id="KW-0646">Protease inhibitor</keyword>
<keyword id="KW-0677">Repeat</keyword>
<keyword id="KW-0964">Secreted</keyword>
<keyword id="KW-0722">Serine protease inhibitor</keyword>
<keyword id="KW-0732">Signal</keyword>
<proteinExistence type="evidence at protein level"/>
<dbReference type="EMBL" id="HE610402">
    <property type="protein sequence ID" value="CCE46176.1"/>
    <property type="molecule type" value="mRNA"/>
</dbReference>
<dbReference type="SMR" id="H2A0N5"/>
<dbReference type="GO" id="GO:0005615">
    <property type="term" value="C:extracellular space"/>
    <property type="evidence" value="ECO:0007669"/>
    <property type="project" value="TreeGrafter"/>
</dbReference>
<dbReference type="GO" id="GO:0004867">
    <property type="term" value="F:serine-type endopeptidase inhibitor activity"/>
    <property type="evidence" value="ECO:0007669"/>
    <property type="project" value="UniProtKB-KW"/>
</dbReference>
<dbReference type="CDD" id="cd00109">
    <property type="entry name" value="Kunitz-type"/>
    <property type="match status" value="1"/>
</dbReference>
<dbReference type="Gene3D" id="4.10.410.10">
    <property type="entry name" value="Pancreatic trypsin inhibitor Kunitz domain"/>
    <property type="match status" value="2"/>
</dbReference>
<dbReference type="InterPro" id="IPR002223">
    <property type="entry name" value="Kunitz_BPTI"/>
</dbReference>
<dbReference type="InterPro" id="IPR036880">
    <property type="entry name" value="Kunitz_BPTI_sf"/>
</dbReference>
<dbReference type="InterPro" id="IPR020901">
    <property type="entry name" value="Prtase_inh_Kunz-CS"/>
</dbReference>
<dbReference type="InterPro" id="IPR050098">
    <property type="entry name" value="TFPI/VKTCI-like"/>
</dbReference>
<dbReference type="PANTHER" id="PTHR10083:SF374">
    <property type="entry name" value="BPTI_KUNITZ INHIBITOR DOMAIN-CONTAINING PROTEIN"/>
    <property type="match status" value="1"/>
</dbReference>
<dbReference type="PANTHER" id="PTHR10083">
    <property type="entry name" value="KUNITZ-TYPE PROTEASE INHIBITOR-RELATED"/>
    <property type="match status" value="1"/>
</dbReference>
<dbReference type="Pfam" id="PF00014">
    <property type="entry name" value="Kunitz_BPTI"/>
    <property type="match status" value="2"/>
</dbReference>
<dbReference type="SMART" id="SM00131">
    <property type="entry name" value="KU"/>
    <property type="match status" value="2"/>
</dbReference>
<dbReference type="SUPFAM" id="SSF57362">
    <property type="entry name" value="BPTI-like"/>
    <property type="match status" value="2"/>
</dbReference>
<dbReference type="PROSITE" id="PS00280">
    <property type="entry name" value="BPTI_KUNITZ_1"/>
    <property type="match status" value="1"/>
</dbReference>
<dbReference type="PROSITE" id="PS50279">
    <property type="entry name" value="BPTI_KUNITZ_2"/>
    <property type="match status" value="2"/>
</dbReference>
<protein>
    <recommendedName>
        <fullName>BPTI/Kunitz domain-containing protein 3</fullName>
    </recommendedName>
    <alternativeName>
        <fullName>Nacre serine protease inhibitor 2</fullName>
    </alternativeName>
</protein>
<feature type="signal peptide" evidence="1">
    <location>
        <begin position="1"/>
        <end position="16"/>
    </location>
</feature>
<feature type="chain" id="PRO_0000417939" description="BPTI/Kunitz domain-containing protein 3" evidence="1">
    <location>
        <begin position="17"/>
        <end position="157"/>
    </location>
</feature>
<feature type="domain" description="BPTI/Kunitz inhibitor 1" evidence="2">
    <location>
        <begin position="42"/>
        <end position="95"/>
    </location>
</feature>
<feature type="domain" description="BPTI/Kunitz inhibitor 2" evidence="2">
    <location>
        <begin position="97"/>
        <end position="151"/>
    </location>
</feature>
<feature type="disulfide bond" evidence="2">
    <location>
        <begin position="42"/>
        <end position="95"/>
    </location>
</feature>
<feature type="disulfide bond" evidence="2">
    <location>
        <begin position="70"/>
        <end position="91"/>
    </location>
</feature>
<feature type="disulfide bond" evidence="2">
    <location>
        <begin position="97"/>
        <end position="151"/>
    </location>
</feature>
<feature type="disulfide bond" evidence="2">
    <location>
        <begin position="107"/>
        <end position="134"/>
    </location>
</feature>
<feature type="disulfide bond" evidence="2">
    <location>
        <begin position="126"/>
        <end position="147"/>
    </location>
</feature>
<evidence type="ECO:0000255" key="1"/>
<evidence type="ECO:0000255" key="2">
    <source>
        <dbReference type="PROSITE-ProRule" id="PRU00031"/>
    </source>
</evidence>
<evidence type="ECO:0000269" key="3">
    <source>
    </source>
</evidence>
<evidence type="ECO:0000305" key="4"/>
<organism>
    <name type="scientific">Margaritifera margaritifera</name>
    <name type="common">Freshwater pearl mussel</name>
    <dbReference type="NCBI Taxonomy" id="102329"/>
    <lineage>
        <taxon>Eukaryota</taxon>
        <taxon>Metazoa</taxon>
        <taxon>Spiralia</taxon>
        <taxon>Lophotrochozoa</taxon>
        <taxon>Mollusca</taxon>
        <taxon>Bivalvia</taxon>
        <taxon>Autobranchia</taxon>
        <taxon>Pteriomorphia</taxon>
        <taxon>Pterioida</taxon>
        <taxon>Pterioidea</taxon>
        <taxon>Pteriidae</taxon>
        <taxon>Pinctada</taxon>
    </lineage>
</organism>
<reference evidence="4" key="1">
    <citation type="journal article" date="2010" name="BMC Genomics">
        <title>Transcriptome and proteome analysis of Pinctada margaritifera calcifying mantle and shell: focus on biomineralization.</title>
        <authorList>
            <person name="Joubert C."/>
            <person name="Piquemal D."/>
            <person name="Marie B."/>
            <person name="Manchon L."/>
            <person name="Pierrat F."/>
            <person name="Zanella-Cleon I."/>
            <person name="Cochennec-Laureau N."/>
            <person name="Gueguen Y."/>
            <person name="Montagnani C."/>
        </authorList>
    </citation>
    <scope>NUCLEOTIDE SEQUENCE [MRNA]</scope>
    <scope>IDENTIFICATION</scope>
    <source>
        <tissue>Mantle</tissue>
    </source>
</reference>
<reference key="2">
    <citation type="journal article" date="2012" name="Proc. Natl. Acad. Sci. U.S.A.">
        <title>Different secretory repertoires control the biomineralization processes of prism and nacre deposition of the pearl oyster shell.</title>
        <authorList>
            <person name="Marie B."/>
            <person name="Joubert C."/>
            <person name="Tayale A."/>
            <person name="Zanella-Cleon I."/>
            <person name="Belliard C."/>
            <person name="Piquemal D."/>
            <person name="Cochennec-Laureau N."/>
            <person name="Marin F."/>
            <person name="Gueguen Y."/>
            <person name="Montagnani C."/>
        </authorList>
    </citation>
    <scope>PROTEIN SEQUENCE OF 23-41</scope>
    <scope>SUBCELLULAR LOCATION</scope>
    <scope>TISSUE SPECIFICITY</scope>
    <source>
        <tissue>Shell</tissue>
    </source>
</reference>
<name>KCP3_PINMG</name>
<comment type="subcellular location">
    <subcellularLocation>
        <location evidence="3">Secreted</location>
    </subcellularLocation>
</comment>
<comment type="tissue specificity">
    <text evidence="3">Nacreous layer of shell (at protein level).</text>
</comment>
<accession>H2A0N5</accession>